<gene>
    <name evidence="11 15" type="primary">SEC61B</name>
</gene>
<comment type="function">
    <text evidence="3 4 7 8">Component of SEC61 channel-forming translocon complex that mediates transport of signal peptide-containing precursor polypeptides across the endoplasmic reticulum (ER) (PubMed:12475939). Forms a ribosome receptor and a gated pore in the ER membrane, both functions required for cotranslational translocation of nascent polypeptides (PubMed:12475939). The SEC61 channel is also involved in ER membrane insertion of transmembrane proteins: it mediates membrane insertion of the first few transmembrane segments of proteins, while insertion of subsequent transmembrane regions of multi-pass membrane proteins is mediated by the multi-pass translocon (MPT) complex (PubMed:32820719, PubMed:36261522). The SEC61 channel cooperates with the translocating protein TRAM1 to import nascent proteins into the ER (PubMed:19121997).</text>
</comment>
<comment type="subunit">
    <text evidence="4 7 8 9">The SEC61 channel-forming translocon complex consists of channel-forming core components SEC61A1, SEC61B and SEC61G and different auxiliary components such as SEC62 and SEC63 (PubMed:36697828). The SEC61 channel associates with the multi-pass translocon (MPT) complex (PubMed:32820719, PubMed:36261522). Interacts with TRAM1 (PubMed:19121997).</text>
</comment>
<comment type="interaction">
    <interactant intactId="EBI-1788819">
        <id>P60468</id>
    </interactant>
    <interactant intactId="EBI-77683">
        <id>P51572</id>
        <label>BCAP31</label>
    </interactant>
    <organismsDiffer>false</organismsDiffer>
    <experiments>7</experiments>
</comment>
<comment type="interaction">
    <interactant intactId="EBI-1788819">
        <id>P60468</id>
    </interactant>
    <interactant intactId="EBI-1172006">
        <id>Q9H9S3</id>
        <label>SEC61A2</label>
    </interactant>
    <organismsDiffer>false</organismsDiffer>
    <experiments>2</experiments>
</comment>
<comment type="interaction">
    <interactant intactId="EBI-1788819">
        <id>P60468</id>
    </interactant>
    <interactant intactId="EBI-714168">
        <id>P43307</id>
        <label>SSR1</label>
    </interactant>
    <organismsDiffer>false</organismsDiffer>
    <experiments>2</experiments>
</comment>
<comment type="interaction">
    <interactant intactId="EBI-1788819">
        <id>P60468</id>
    </interactant>
    <interactant intactId="EBI-25475914">
        <id>P0DTD8</id>
        <label>7b</label>
    </interactant>
    <organismsDiffer>true</organismsDiffer>
    <experiments>3</experiments>
</comment>
<comment type="interaction">
    <interactant intactId="EBI-1788819">
        <id>P60468</id>
    </interactant>
    <interactant intactId="EBI-2989">
        <id>Q12154</id>
        <label>GET3</label>
    </interactant>
    <organismsDiffer>true</organismsDiffer>
    <experiments>4</experiments>
</comment>
<comment type="subcellular location">
    <subcellularLocation>
        <location evidence="3 6">Endoplasmic reticulum membrane</location>
        <topology evidence="1">Single-pass membrane protein</topology>
    </subcellularLocation>
</comment>
<comment type="disease">
    <text evidence="14">Loss-of-function SEC61B variations may cause autosomal dominant polycystic liver disease (PCLD) in patients that lack variations in known causative genes, such as PRKCSH and SEC63.</text>
</comment>
<comment type="similarity">
    <text evidence="12">Belongs to the SEC61-beta family.</text>
</comment>
<proteinExistence type="evidence at protein level"/>
<dbReference type="EMBL" id="L25085">
    <property type="protein sequence ID" value="AAA19706.1"/>
    <property type="molecule type" value="mRNA"/>
</dbReference>
<dbReference type="EMBL" id="CR456883">
    <property type="protein sequence ID" value="CAG33164.1"/>
    <property type="molecule type" value="mRNA"/>
</dbReference>
<dbReference type="EMBL" id="AL137067">
    <property type="status" value="NOT_ANNOTATED_CDS"/>
    <property type="molecule type" value="Genomic_DNA"/>
</dbReference>
<dbReference type="EMBL" id="BC001734">
    <property type="protein sequence ID" value="AAH01734.1"/>
    <property type="molecule type" value="mRNA"/>
</dbReference>
<dbReference type="CCDS" id="CCDS6741.1"/>
<dbReference type="PIR" id="S42410">
    <property type="entry name" value="S42410"/>
</dbReference>
<dbReference type="RefSeq" id="NP_006799.1">
    <property type="nucleotide sequence ID" value="NM_006808.3"/>
</dbReference>
<dbReference type="PDB" id="6W6L">
    <property type="method" value="EM"/>
    <property type="resolution" value="3.84 A"/>
    <property type="chains" value="3=1-96"/>
</dbReference>
<dbReference type="PDB" id="8B6L">
    <property type="method" value="EM"/>
    <property type="resolution" value="7.60 A"/>
    <property type="chains" value="B=1-96"/>
</dbReference>
<dbReference type="PDB" id="8DNV">
    <property type="method" value="EM"/>
    <property type="resolution" value="3.03 A"/>
    <property type="chains" value="C=1-96"/>
</dbReference>
<dbReference type="PDB" id="8DNW">
    <property type="method" value="EM"/>
    <property type="resolution" value="3.40 A"/>
    <property type="chains" value="C=1-96"/>
</dbReference>
<dbReference type="PDB" id="8DNX">
    <property type="method" value="EM"/>
    <property type="resolution" value="2.98 A"/>
    <property type="chains" value="C=1-96"/>
</dbReference>
<dbReference type="PDB" id="8DNY">
    <property type="method" value="EM"/>
    <property type="resolution" value="2.85 A"/>
    <property type="chains" value="C=1-96"/>
</dbReference>
<dbReference type="PDB" id="8DNZ">
    <property type="method" value="EM"/>
    <property type="resolution" value="2.57 A"/>
    <property type="chains" value="C=1-96"/>
</dbReference>
<dbReference type="PDB" id="8DO0">
    <property type="method" value="EM"/>
    <property type="resolution" value="2.86 A"/>
    <property type="chains" value="C=1-96"/>
</dbReference>
<dbReference type="PDB" id="8DO1">
    <property type="method" value="EM"/>
    <property type="resolution" value="3.01 A"/>
    <property type="chains" value="C=1-96"/>
</dbReference>
<dbReference type="PDB" id="8DO2">
    <property type="method" value="EM"/>
    <property type="resolution" value="2.95 A"/>
    <property type="chains" value="C=1-96"/>
</dbReference>
<dbReference type="PDB" id="8DO3">
    <property type="method" value="EM"/>
    <property type="resolution" value="3.22 A"/>
    <property type="chains" value="C=1-96"/>
</dbReference>
<dbReference type="PDB" id="8OJ0">
    <property type="method" value="EM"/>
    <property type="resolution" value="3.30 A"/>
    <property type="chains" value="3=1-96"/>
</dbReference>
<dbReference type="PDB" id="8OJ8">
    <property type="method" value="EM"/>
    <property type="resolution" value="3.30 A"/>
    <property type="chains" value="3=1-96"/>
</dbReference>
<dbReference type="PDBsum" id="6W6L"/>
<dbReference type="PDBsum" id="8B6L"/>
<dbReference type="PDBsum" id="8DNV"/>
<dbReference type="PDBsum" id="8DNW"/>
<dbReference type="PDBsum" id="8DNX"/>
<dbReference type="PDBsum" id="8DNY"/>
<dbReference type="PDBsum" id="8DNZ"/>
<dbReference type="PDBsum" id="8DO0"/>
<dbReference type="PDBsum" id="8DO1"/>
<dbReference type="PDBsum" id="8DO2"/>
<dbReference type="PDBsum" id="8DO3"/>
<dbReference type="PDBsum" id="8OJ0"/>
<dbReference type="PDBsum" id="8OJ8"/>
<dbReference type="EMDB" id="EMD-15870"/>
<dbReference type="EMDB" id="EMD-16902"/>
<dbReference type="EMDB" id="EMD-16908"/>
<dbReference type="EMDB" id="EMD-27581"/>
<dbReference type="EMDB" id="EMD-27582"/>
<dbReference type="EMDB" id="EMD-27583"/>
<dbReference type="EMDB" id="EMD-27584"/>
<dbReference type="EMDB" id="EMD-27585"/>
<dbReference type="EMDB" id="EMD-27586"/>
<dbReference type="EMDB" id="EMD-27587"/>
<dbReference type="EMDB" id="EMD-27588"/>
<dbReference type="EMDB" id="EMD-27589"/>
<dbReference type="EMDB" id="EMD-29608"/>
<dbReference type="EMDB" id="EMD-29609"/>
<dbReference type="EMDB" id="EMD-29610"/>
<dbReference type="EMDB" id="EMD-29611"/>
<dbReference type="EMDB" id="EMD-29612"/>
<dbReference type="EMDB" id="EMD-29613"/>
<dbReference type="EMDB" id="EMD-29614"/>
<dbReference type="EMDB" id="EMD-29616"/>
<dbReference type="EMDB" id="EMD-29617"/>
<dbReference type="EMDB" id="EMD-29635"/>
<dbReference type="SMR" id="P60468"/>
<dbReference type="BioGRID" id="116152">
    <property type="interactions" value="795"/>
</dbReference>
<dbReference type="ComplexPortal" id="CPX-8073">
    <property type="entry name" value="SEC61 protein-conducting channel complex, SEC1A1 variant"/>
</dbReference>
<dbReference type="ComplexPortal" id="CPX-8169">
    <property type="entry name" value="SEC61 protein-conducting channel complex, SEC1A2 variant"/>
</dbReference>
<dbReference type="DIP" id="DIP-40997N"/>
<dbReference type="FunCoup" id="P60468">
    <property type="interactions" value="1685"/>
</dbReference>
<dbReference type="IntAct" id="P60468">
    <property type="interactions" value="255"/>
</dbReference>
<dbReference type="MINT" id="P60468"/>
<dbReference type="STRING" id="9606.ENSP00000223641"/>
<dbReference type="TCDB" id="3.A.5.9.1">
    <property type="family name" value="the general secretory pathway (sec) family"/>
</dbReference>
<dbReference type="GlyCosmos" id="P60468">
    <property type="glycosylation" value="2 sites, 1 glycan"/>
</dbReference>
<dbReference type="GlyGen" id="P60468">
    <property type="glycosylation" value="5 sites, 1 O-linked glycan (4 sites)"/>
</dbReference>
<dbReference type="iPTMnet" id="P60468"/>
<dbReference type="PhosphoSitePlus" id="P60468"/>
<dbReference type="SwissPalm" id="P60468"/>
<dbReference type="BioMuta" id="SEC61B"/>
<dbReference type="DMDM" id="42560366"/>
<dbReference type="jPOST" id="P60468"/>
<dbReference type="MassIVE" id="P60468"/>
<dbReference type="PaxDb" id="9606-ENSP00000223641"/>
<dbReference type="PeptideAtlas" id="P60468"/>
<dbReference type="ProteomicsDB" id="57208"/>
<dbReference type="Pumba" id="P60468"/>
<dbReference type="TopDownProteomics" id="P60468"/>
<dbReference type="Antibodypedia" id="14546">
    <property type="antibodies" value="161 antibodies from 30 providers"/>
</dbReference>
<dbReference type="DNASU" id="10952"/>
<dbReference type="Ensembl" id="ENST00000223641.5">
    <property type="protein sequence ID" value="ENSP00000223641.4"/>
    <property type="gene ID" value="ENSG00000106803.10"/>
</dbReference>
<dbReference type="GeneID" id="10952"/>
<dbReference type="KEGG" id="hsa:10952"/>
<dbReference type="MANE-Select" id="ENST00000223641.5">
    <property type="protein sequence ID" value="ENSP00000223641.4"/>
    <property type="RefSeq nucleotide sequence ID" value="NM_006808.3"/>
    <property type="RefSeq protein sequence ID" value="NP_006799.1"/>
</dbReference>
<dbReference type="UCSC" id="uc004azh.4">
    <property type="organism name" value="human"/>
</dbReference>
<dbReference type="AGR" id="HGNC:16993"/>
<dbReference type="CTD" id="10952"/>
<dbReference type="DisGeNET" id="10952"/>
<dbReference type="GeneCards" id="SEC61B"/>
<dbReference type="HGNC" id="HGNC:16993">
    <property type="gene designation" value="SEC61B"/>
</dbReference>
<dbReference type="HPA" id="ENSG00000106803">
    <property type="expression patterns" value="Low tissue specificity"/>
</dbReference>
<dbReference type="MIM" id="609214">
    <property type="type" value="gene"/>
</dbReference>
<dbReference type="neXtProt" id="NX_P60468"/>
<dbReference type="OpenTargets" id="ENSG00000106803"/>
<dbReference type="PharmGKB" id="PA134888963"/>
<dbReference type="VEuPathDB" id="HostDB:ENSG00000106803"/>
<dbReference type="eggNOG" id="KOG3457">
    <property type="taxonomic scope" value="Eukaryota"/>
</dbReference>
<dbReference type="GeneTree" id="ENSGT00390000003561"/>
<dbReference type="HOGENOM" id="CLU_133423_4_0_1"/>
<dbReference type="InParanoid" id="P60468"/>
<dbReference type="OMA" id="SSGMWRF"/>
<dbReference type="OrthoDB" id="5401193at2759"/>
<dbReference type="PAN-GO" id="P60468">
    <property type="GO annotations" value="4 GO annotations based on evolutionary models"/>
</dbReference>
<dbReference type="PhylomeDB" id="P60468"/>
<dbReference type="TreeFam" id="TF313144"/>
<dbReference type="PathwayCommons" id="P60468"/>
<dbReference type="Reactome" id="R-HSA-1236974">
    <property type="pathway name" value="ER-Phagosome pathway"/>
</dbReference>
<dbReference type="Reactome" id="R-HSA-1799339">
    <property type="pathway name" value="SRP-dependent cotranslational protein targeting to membrane"/>
</dbReference>
<dbReference type="Reactome" id="R-HSA-9609523">
    <property type="pathway name" value="Insertion of tail-anchored proteins into the endoplasmic reticulum membrane"/>
</dbReference>
<dbReference type="SignaLink" id="P60468"/>
<dbReference type="SIGNOR" id="P60468"/>
<dbReference type="BioGRID-ORCS" id="10952">
    <property type="hits" value="389 hits in 1166 CRISPR screens"/>
</dbReference>
<dbReference type="CD-CODE" id="91857CE7">
    <property type="entry name" value="Nucleolus"/>
</dbReference>
<dbReference type="ChiTaRS" id="SEC61B">
    <property type="organism name" value="human"/>
</dbReference>
<dbReference type="GeneWiki" id="SEC61B"/>
<dbReference type="GenomeRNAi" id="10952"/>
<dbReference type="Pharos" id="P60468">
    <property type="development level" value="Tbio"/>
</dbReference>
<dbReference type="PRO" id="PR:P60468"/>
<dbReference type="Proteomes" id="UP000005640">
    <property type="component" value="Chromosome 9"/>
</dbReference>
<dbReference type="RNAct" id="P60468">
    <property type="molecule type" value="protein"/>
</dbReference>
<dbReference type="Bgee" id="ENSG00000106803">
    <property type="expression patterns" value="Expressed in parotid gland and 203 other cell types or tissues"/>
</dbReference>
<dbReference type="ExpressionAtlas" id="P60468">
    <property type="expression patterns" value="baseline and differential"/>
</dbReference>
<dbReference type="GO" id="GO:0005829">
    <property type="term" value="C:cytosol"/>
    <property type="evidence" value="ECO:0000304"/>
    <property type="project" value="Reactome"/>
</dbReference>
<dbReference type="GO" id="GO:0005783">
    <property type="term" value="C:endoplasmic reticulum"/>
    <property type="evidence" value="ECO:0000314"/>
    <property type="project" value="ParkinsonsUK-UCL"/>
</dbReference>
<dbReference type="GO" id="GO:0005789">
    <property type="term" value="C:endoplasmic reticulum membrane"/>
    <property type="evidence" value="ECO:0000314"/>
    <property type="project" value="UniProtKB"/>
</dbReference>
<dbReference type="GO" id="GO:0044322">
    <property type="term" value="C:endoplasmic reticulum quality control compartment"/>
    <property type="evidence" value="ECO:0000314"/>
    <property type="project" value="UniProtKB"/>
</dbReference>
<dbReference type="GO" id="GO:0031205">
    <property type="term" value="C:endoplasmic reticulum Sec complex"/>
    <property type="evidence" value="ECO:0000250"/>
    <property type="project" value="UniProtKB"/>
</dbReference>
<dbReference type="GO" id="GO:0016020">
    <property type="term" value="C:membrane"/>
    <property type="evidence" value="ECO:0000314"/>
    <property type="project" value="MGI"/>
</dbReference>
<dbReference type="GO" id="GO:0005784">
    <property type="term" value="C:Sec61 translocon complex"/>
    <property type="evidence" value="ECO:0000314"/>
    <property type="project" value="UniProtKB"/>
</dbReference>
<dbReference type="GO" id="GO:0048408">
    <property type="term" value="F:epidermal growth factor binding"/>
    <property type="evidence" value="ECO:0000353"/>
    <property type="project" value="UniProtKB"/>
</dbReference>
<dbReference type="GO" id="GO:0005085">
    <property type="term" value="F:guanyl-nucleotide exchange factor activity"/>
    <property type="evidence" value="ECO:0000318"/>
    <property type="project" value="GO_Central"/>
</dbReference>
<dbReference type="GO" id="GO:0043022">
    <property type="term" value="F:ribosome binding"/>
    <property type="evidence" value="ECO:0000314"/>
    <property type="project" value="UniProtKB"/>
</dbReference>
<dbReference type="GO" id="GO:0003723">
    <property type="term" value="F:RNA binding"/>
    <property type="evidence" value="ECO:0007005"/>
    <property type="project" value="UniProtKB"/>
</dbReference>
<dbReference type="GO" id="GO:0036503">
    <property type="term" value="P:ERAD pathway"/>
    <property type="evidence" value="ECO:0000314"/>
    <property type="project" value="UniProtKB"/>
</dbReference>
<dbReference type="GO" id="GO:0031204">
    <property type="term" value="P:post-translational protein targeting to membrane, translocation"/>
    <property type="evidence" value="ECO:0000318"/>
    <property type="project" value="GO_Central"/>
</dbReference>
<dbReference type="GO" id="GO:0030970">
    <property type="term" value="P:retrograde protein transport, ER to cytosol"/>
    <property type="evidence" value="ECO:0000315"/>
    <property type="project" value="UniProtKB"/>
</dbReference>
<dbReference type="GO" id="GO:0006616">
    <property type="term" value="P:SRP-dependent cotranslational protein targeting to membrane, translocation"/>
    <property type="evidence" value="ECO:0000318"/>
    <property type="project" value="GO_Central"/>
</dbReference>
<dbReference type="InterPro" id="IPR030671">
    <property type="entry name" value="Sec61-beta/Sbh"/>
</dbReference>
<dbReference type="InterPro" id="IPR016482">
    <property type="entry name" value="SecG/Sec61-beta/Sbh"/>
</dbReference>
<dbReference type="PANTHER" id="PTHR13509">
    <property type="entry name" value="SEC61 SUBUNIT BETA"/>
    <property type="match status" value="1"/>
</dbReference>
<dbReference type="Pfam" id="PF03911">
    <property type="entry name" value="Sec61_beta"/>
    <property type="match status" value="1"/>
</dbReference>
<dbReference type="PIRSF" id="PIRSF006398">
    <property type="entry name" value="Sec61_beta_euk"/>
    <property type="match status" value="1"/>
</dbReference>
<reference key="1">
    <citation type="journal article" date="1994" name="Nature">
        <title>Evolutionary conservation of components of the protein translocation complex.</title>
        <authorList>
            <person name="Hartmann E."/>
            <person name="Sommer T."/>
            <person name="Prehn S."/>
            <person name="Goerlich D."/>
            <person name="Jentsch S."/>
            <person name="Rapoport T.A."/>
        </authorList>
    </citation>
    <scope>NUCLEOTIDE SEQUENCE [MRNA]</scope>
</reference>
<reference key="2">
    <citation type="submission" date="2004-06" db="EMBL/GenBank/DDBJ databases">
        <title>Cloning of human full open reading frames in Gateway(TM) system entry vector (pDONR201).</title>
        <authorList>
            <person name="Ebert L."/>
            <person name="Schick M."/>
            <person name="Neubert P."/>
            <person name="Schatten R."/>
            <person name="Henze S."/>
            <person name="Korn B."/>
        </authorList>
    </citation>
    <scope>NUCLEOTIDE SEQUENCE [LARGE SCALE MRNA]</scope>
</reference>
<reference key="3">
    <citation type="journal article" date="2004" name="Nature">
        <title>DNA sequence and analysis of human chromosome 9.</title>
        <authorList>
            <person name="Humphray S.J."/>
            <person name="Oliver K."/>
            <person name="Hunt A.R."/>
            <person name="Plumb R.W."/>
            <person name="Loveland J.E."/>
            <person name="Howe K.L."/>
            <person name="Andrews T.D."/>
            <person name="Searle S."/>
            <person name="Hunt S.E."/>
            <person name="Scott C.E."/>
            <person name="Jones M.C."/>
            <person name="Ainscough R."/>
            <person name="Almeida J.P."/>
            <person name="Ambrose K.D."/>
            <person name="Ashwell R.I.S."/>
            <person name="Babbage A.K."/>
            <person name="Babbage S."/>
            <person name="Bagguley C.L."/>
            <person name="Bailey J."/>
            <person name="Banerjee R."/>
            <person name="Barker D.J."/>
            <person name="Barlow K.F."/>
            <person name="Bates K."/>
            <person name="Beasley H."/>
            <person name="Beasley O."/>
            <person name="Bird C.P."/>
            <person name="Bray-Allen S."/>
            <person name="Brown A.J."/>
            <person name="Brown J.Y."/>
            <person name="Burford D."/>
            <person name="Burrill W."/>
            <person name="Burton J."/>
            <person name="Carder C."/>
            <person name="Carter N.P."/>
            <person name="Chapman J.C."/>
            <person name="Chen Y."/>
            <person name="Clarke G."/>
            <person name="Clark S.Y."/>
            <person name="Clee C.M."/>
            <person name="Clegg S."/>
            <person name="Collier R.E."/>
            <person name="Corby N."/>
            <person name="Crosier M."/>
            <person name="Cummings A.T."/>
            <person name="Davies J."/>
            <person name="Dhami P."/>
            <person name="Dunn M."/>
            <person name="Dutta I."/>
            <person name="Dyer L.W."/>
            <person name="Earthrowl M.E."/>
            <person name="Faulkner L."/>
            <person name="Fleming C.J."/>
            <person name="Frankish A."/>
            <person name="Frankland J.A."/>
            <person name="French L."/>
            <person name="Fricker D.G."/>
            <person name="Garner P."/>
            <person name="Garnett J."/>
            <person name="Ghori J."/>
            <person name="Gilbert J.G.R."/>
            <person name="Glison C."/>
            <person name="Grafham D.V."/>
            <person name="Gribble S."/>
            <person name="Griffiths C."/>
            <person name="Griffiths-Jones S."/>
            <person name="Grocock R."/>
            <person name="Guy J."/>
            <person name="Hall R.E."/>
            <person name="Hammond S."/>
            <person name="Harley J.L."/>
            <person name="Harrison E.S.I."/>
            <person name="Hart E.A."/>
            <person name="Heath P.D."/>
            <person name="Henderson C.D."/>
            <person name="Hopkins B.L."/>
            <person name="Howard P.J."/>
            <person name="Howden P.J."/>
            <person name="Huckle E."/>
            <person name="Johnson C."/>
            <person name="Johnson D."/>
            <person name="Joy A.A."/>
            <person name="Kay M."/>
            <person name="Keenan S."/>
            <person name="Kershaw J.K."/>
            <person name="Kimberley A.M."/>
            <person name="King A."/>
            <person name="Knights A."/>
            <person name="Laird G.K."/>
            <person name="Langford C."/>
            <person name="Lawlor S."/>
            <person name="Leongamornlert D.A."/>
            <person name="Leversha M."/>
            <person name="Lloyd C."/>
            <person name="Lloyd D.M."/>
            <person name="Lovell J."/>
            <person name="Martin S."/>
            <person name="Mashreghi-Mohammadi M."/>
            <person name="Matthews L."/>
            <person name="McLaren S."/>
            <person name="McLay K.E."/>
            <person name="McMurray A."/>
            <person name="Milne S."/>
            <person name="Nickerson T."/>
            <person name="Nisbett J."/>
            <person name="Nordsiek G."/>
            <person name="Pearce A.V."/>
            <person name="Peck A.I."/>
            <person name="Porter K.M."/>
            <person name="Pandian R."/>
            <person name="Pelan S."/>
            <person name="Phillimore B."/>
            <person name="Povey S."/>
            <person name="Ramsey Y."/>
            <person name="Rand V."/>
            <person name="Scharfe M."/>
            <person name="Sehra H.K."/>
            <person name="Shownkeen R."/>
            <person name="Sims S.K."/>
            <person name="Skuce C.D."/>
            <person name="Smith M."/>
            <person name="Steward C.A."/>
            <person name="Swarbreck D."/>
            <person name="Sycamore N."/>
            <person name="Tester J."/>
            <person name="Thorpe A."/>
            <person name="Tracey A."/>
            <person name="Tromans A."/>
            <person name="Thomas D.W."/>
            <person name="Wall M."/>
            <person name="Wallis J.M."/>
            <person name="West A.P."/>
            <person name="Whitehead S.L."/>
            <person name="Willey D.L."/>
            <person name="Williams S.A."/>
            <person name="Wilming L."/>
            <person name="Wray P.W."/>
            <person name="Young L."/>
            <person name="Ashurst J.L."/>
            <person name="Coulson A."/>
            <person name="Blocker H."/>
            <person name="Durbin R.M."/>
            <person name="Sulston J.E."/>
            <person name="Hubbard T."/>
            <person name="Jackson M.J."/>
            <person name="Bentley D.R."/>
            <person name="Beck S."/>
            <person name="Rogers J."/>
            <person name="Dunham I."/>
        </authorList>
    </citation>
    <scope>NUCLEOTIDE SEQUENCE [LARGE SCALE GENOMIC DNA]</scope>
</reference>
<reference key="4">
    <citation type="journal article" date="2004" name="Genome Res.">
        <title>The status, quality, and expansion of the NIH full-length cDNA project: the Mammalian Gene Collection (MGC).</title>
        <authorList>
            <consortium name="The MGC Project Team"/>
        </authorList>
    </citation>
    <scope>NUCLEOTIDE SEQUENCE [LARGE SCALE MRNA]</scope>
    <source>
        <tissue>Brain</tissue>
    </source>
</reference>
<reference key="5">
    <citation type="submission" date="2009-03" db="UniProtKB">
        <authorList>
            <person name="Bienvenut W.V."/>
            <person name="Waridel P."/>
            <person name="Quadroni M."/>
        </authorList>
    </citation>
    <scope>PROTEIN SEQUENCE OF 2-20</scope>
    <scope>CLEAVAGE OF INITIATOR METHIONINE</scope>
    <scope>PHOSPHORYLATION AT SER-7</scope>
    <scope>IDENTIFICATION BY MASS SPECTROMETRY</scope>
    <source>
        <tissue>Embryonic kidney</tissue>
    </source>
</reference>
<reference key="6">
    <citation type="journal article" date="2002" name="Mol. Biol. Cell">
        <title>Different transmembrane domains associate with distinct endoplasmic reticulum components during membrane integration of a polytopic protein.</title>
        <authorList>
            <person name="Meacock S.L."/>
            <person name="Lecomte F.J."/>
            <person name="Crawshaw S.G."/>
            <person name="High S."/>
        </authorList>
    </citation>
    <scope>FUNCTION</scope>
    <scope>SUBCELLULAR LOCATION</scope>
</reference>
<reference key="7">
    <citation type="journal article" date="2006" name="Cell">
        <title>Global, in vivo, and site-specific phosphorylation dynamics in signaling networks.</title>
        <authorList>
            <person name="Olsen J.V."/>
            <person name="Blagoev B."/>
            <person name="Gnad F."/>
            <person name="Macek B."/>
            <person name="Kumar C."/>
            <person name="Mortensen P."/>
            <person name="Mann M."/>
        </authorList>
    </citation>
    <scope>IDENTIFICATION BY MASS SPECTROMETRY [LARGE SCALE ANALYSIS]</scope>
    <source>
        <tissue>Cervix carcinoma</tissue>
    </source>
</reference>
<reference key="8">
    <citation type="journal article" date="2008" name="Proc. Natl. Acad. Sci. U.S.A.">
        <title>A quantitative atlas of mitotic phosphorylation.</title>
        <authorList>
            <person name="Dephoure N."/>
            <person name="Zhou C."/>
            <person name="Villen J."/>
            <person name="Beausoleil S.A."/>
            <person name="Bakalarski C.E."/>
            <person name="Elledge S.J."/>
            <person name="Gygi S.P."/>
        </authorList>
    </citation>
    <scope>PHOSPHORYLATION [LARGE SCALE ANALYSIS] AT SER-13; SER-14 AND SER-17</scope>
    <scope>IDENTIFICATION BY MASS SPECTROMETRY [LARGE SCALE ANALYSIS]</scope>
    <source>
        <tissue>Cervix carcinoma</tissue>
    </source>
</reference>
<reference key="9">
    <citation type="journal article" date="2009" name="Anal. Chem.">
        <title>Lys-N and trypsin cover complementary parts of the phosphoproteome in a refined SCX-based approach.</title>
        <authorList>
            <person name="Gauci S."/>
            <person name="Helbig A.O."/>
            <person name="Slijper M."/>
            <person name="Krijgsveld J."/>
            <person name="Heck A.J."/>
            <person name="Mohammed S."/>
        </authorList>
    </citation>
    <scope>IDENTIFICATION BY MASS SPECTROMETRY [LARGE SCALE ANALYSIS]</scope>
</reference>
<reference key="10">
    <citation type="journal article" date="2009" name="J. Biol. Chem.">
        <title>TRAM1 participates in human cytomegalovirus US2- and US11-mediated dislocation of an endoplasmic reticulum membrane glycoprotein.</title>
        <authorList>
            <person name="Oresic K."/>
            <person name="Ng C.L."/>
            <person name="Tortorella D."/>
        </authorList>
    </citation>
    <scope>FUNCTION</scope>
    <scope>INTERACTION WITH TRAM1</scope>
</reference>
<reference key="11">
    <citation type="journal article" date="2009" name="Mol. Cell. Proteomics">
        <title>Large-scale proteomics analysis of the human kinome.</title>
        <authorList>
            <person name="Oppermann F.S."/>
            <person name="Gnad F."/>
            <person name="Olsen J.V."/>
            <person name="Hornberger R."/>
            <person name="Greff Z."/>
            <person name="Keri G."/>
            <person name="Mann M."/>
            <person name="Daub H."/>
        </authorList>
    </citation>
    <scope>IDENTIFICATION BY MASS SPECTROMETRY [LARGE SCALE ANALYSIS]</scope>
</reference>
<reference key="12">
    <citation type="journal article" date="2010" name="Sci. Signal.">
        <title>Quantitative phosphoproteomics reveals widespread full phosphorylation site occupancy during mitosis.</title>
        <authorList>
            <person name="Olsen J.V."/>
            <person name="Vermeulen M."/>
            <person name="Santamaria A."/>
            <person name="Kumar C."/>
            <person name="Miller M.L."/>
            <person name="Jensen L.J."/>
            <person name="Gnad F."/>
            <person name="Cox J."/>
            <person name="Jensen T.S."/>
            <person name="Nigg E.A."/>
            <person name="Brunak S."/>
            <person name="Mann M."/>
        </authorList>
    </citation>
    <scope>PHOSPHORYLATION [LARGE SCALE ANALYSIS] AT SER-17</scope>
    <scope>IDENTIFICATION BY MASS SPECTROMETRY [LARGE SCALE ANALYSIS]</scope>
    <source>
        <tissue>Cervix carcinoma</tissue>
    </source>
</reference>
<reference key="13">
    <citation type="journal article" date="2011" name="BMC Syst. Biol.">
        <title>Initial characterization of the human central proteome.</title>
        <authorList>
            <person name="Burkard T.R."/>
            <person name="Planyavsky M."/>
            <person name="Kaupe I."/>
            <person name="Breitwieser F.P."/>
            <person name="Buerckstuemmer T."/>
            <person name="Bennett K.L."/>
            <person name="Superti-Furga G."/>
            <person name="Colinge J."/>
        </authorList>
    </citation>
    <scope>IDENTIFICATION BY MASS SPECTROMETRY [LARGE SCALE ANALYSIS]</scope>
</reference>
<reference key="14">
    <citation type="journal article" date="2011" name="J. Lipid Res.">
        <title>Site-specific analysis of protein S-acylation by resin-assisted capture.</title>
        <authorList>
            <person name="Forrester M.T."/>
            <person name="Hess D.T."/>
            <person name="Thompson J.W."/>
            <person name="Hultman R."/>
            <person name="Moseley M.A."/>
            <person name="Stamler J.S."/>
            <person name="Casey P.J."/>
        </authorList>
    </citation>
    <scope>MUTAGENESIS OF CYS-39</scope>
    <scope>PALMITOYLATION AT CYS-39</scope>
</reference>
<reference key="15">
    <citation type="journal article" date="2011" name="Sci. Signal.">
        <title>System-wide temporal characterization of the proteome and phosphoproteome of human embryonic stem cell differentiation.</title>
        <authorList>
            <person name="Rigbolt K.T."/>
            <person name="Prokhorova T.A."/>
            <person name="Akimov V."/>
            <person name="Henningsen J."/>
            <person name="Johansen P.T."/>
            <person name="Kratchmarova I."/>
            <person name="Kassem M."/>
            <person name="Mann M."/>
            <person name="Olsen J.V."/>
            <person name="Blagoev B."/>
        </authorList>
    </citation>
    <scope>ACETYLATION [LARGE SCALE ANALYSIS] AT PRO-2</scope>
    <scope>PHOSPHORYLATION [LARGE SCALE ANALYSIS] AT SER-17</scope>
    <scope>CLEAVAGE OF INITIATOR METHIONINE [LARGE SCALE ANALYSIS]</scope>
    <scope>IDENTIFICATION BY MASS SPECTROMETRY [LARGE SCALE ANALYSIS]</scope>
</reference>
<reference key="16">
    <citation type="journal article" date="2012" name="Proc. Natl. Acad. Sci. U.S.A.">
        <title>N-terminal acetylome analyses and functional insights of the N-terminal acetyltransferase NatB.</title>
        <authorList>
            <person name="Van Damme P."/>
            <person name="Lasa M."/>
            <person name="Polevoda B."/>
            <person name="Gazquez C."/>
            <person name="Elosegui-Artola A."/>
            <person name="Kim D.S."/>
            <person name="De Juan-Pardo E."/>
            <person name="Demeyer K."/>
            <person name="Hole K."/>
            <person name="Larrea E."/>
            <person name="Timmerman E."/>
            <person name="Prieto J."/>
            <person name="Arnesen T."/>
            <person name="Sherman F."/>
            <person name="Gevaert K."/>
            <person name="Aldabe R."/>
        </authorList>
    </citation>
    <scope>IDENTIFICATION BY MASS SPECTROMETRY [LARGE SCALE ANALYSIS]</scope>
</reference>
<reference key="17">
    <citation type="journal article" date="2013" name="J. Proteome Res.">
        <title>Toward a comprehensive characterization of a human cancer cell phosphoproteome.</title>
        <authorList>
            <person name="Zhou H."/>
            <person name="Di Palma S."/>
            <person name="Preisinger C."/>
            <person name="Peng M."/>
            <person name="Polat A.N."/>
            <person name="Heck A.J."/>
            <person name="Mohammed S."/>
        </authorList>
    </citation>
    <scope>PHOSPHORYLATION [LARGE SCALE ANALYSIS] AT THR-9; SER-14 AND SER-17</scope>
    <scope>IDENTIFICATION BY MASS SPECTROMETRY [LARGE SCALE ANALYSIS]</scope>
    <source>
        <tissue>Cervix carcinoma</tissue>
        <tissue>Erythroleukemia</tissue>
    </source>
</reference>
<reference key="18">
    <citation type="journal article" date="2014" name="J. Proteomics">
        <title>An enzyme assisted RP-RPLC approach for in-depth analysis of human liver phosphoproteome.</title>
        <authorList>
            <person name="Bian Y."/>
            <person name="Song C."/>
            <person name="Cheng K."/>
            <person name="Dong M."/>
            <person name="Wang F."/>
            <person name="Huang J."/>
            <person name="Sun D."/>
            <person name="Wang L."/>
            <person name="Ye M."/>
            <person name="Zou H."/>
        </authorList>
    </citation>
    <scope>PHOSPHORYLATION [LARGE SCALE ANALYSIS] AT SER-17</scope>
    <scope>IDENTIFICATION BY MASS SPECTROMETRY [LARGE SCALE ANALYSIS]</scope>
    <source>
        <tissue>Liver</tissue>
    </source>
</reference>
<reference key="19">
    <citation type="journal article" date="2015" name="Proteomics">
        <title>N-terminome analysis of the human mitochondrial proteome.</title>
        <authorList>
            <person name="Vaca Jacome A.S."/>
            <person name="Rabilloud T."/>
            <person name="Schaeffer-Reiss C."/>
            <person name="Rompais M."/>
            <person name="Ayoub D."/>
            <person name="Lane L."/>
            <person name="Bairoch A."/>
            <person name="Van Dorsselaer A."/>
            <person name="Carapito C."/>
        </authorList>
    </citation>
    <scope>CLEAVAGE OF INITIATOR METHIONINE [LARGE SCALE ANALYSIS]</scope>
    <scope>IDENTIFICATION BY MASS SPECTROMETRY [LARGE SCALE ANALYSIS]</scope>
</reference>
<reference key="20">
    <citation type="journal article" date="2017" name="J. Clin. Invest.">
        <title>Isolated polycystic liver disease genes define effectors of polycystin-1 function.</title>
        <authorList>
            <person name="Besse W."/>
            <person name="Dong K."/>
            <person name="Choi J."/>
            <person name="Punia S."/>
            <person name="Fedeles S.V."/>
            <person name="Choi M."/>
            <person name="Gallagher A.R."/>
            <person name="Huang E.B."/>
            <person name="Gulati A."/>
            <person name="Knight J."/>
            <person name="Mane S."/>
            <person name="Tahvanainen E."/>
            <person name="Tahvanainen P."/>
            <person name="Sanna-Cherchi S."/>
            <person name="Lifton R.P."/>
            <person name="Watnick T."/>
            <person name="Pei Y.P."/>
            <person name="Torres V.E."/>
            <person name="Somlo S."/>
        </authorList>
    </citation>
    <scope>INVOLVEMENT IN PCLD</scope>
</reference>
<reference key="21">
    <citation type="journal article" date="2016" name="J. Cell Biol.">
        <title>Dynamic formation of ER-PM junctions presents a lipid phosphatase to regulate phosphoinositides.</title>
        <authorList>
            <person name="Dickson E.J."/>
            <person name="Jensen J.B."/>
            <person name="Vivas O."/>
            <person name="Kruse M."/>
            <person name="Traynor-Kaplan A.E."/>
            <person name="Hille B."/>
        </authorList>
    </citation>
    <scope>SUBCELLULAR LOCATION</scope>
</reference>
<reference key="22">
    <citation type="journal article" date="2020" name="Elife">
        <title>An ER translocon for multi-pass membrane protein biogenesis.</title>
        <authorList>
            <person name="McGilvray P.T."/>
            <person name="Anghel S.A."/>
            <person name="Sundaram A."/>
            <person name="Zhong F."/>
            <person name="Trnka M.J."/>
            <person name="Fuller J.R."/>
            <person name="Hu H."/>
            <person name="Burlingame A.L."/>
            <person name="Keenan R.J."/>
        </authorList>
    </citation>
    <scope>STRUCTURE BY ELECTRON MICROSCOPY (3.8 ANGSTROMS) IN COMPLEX WITH THE RIBOSOME-ASSOCIATED ER TRANSLOCON COMPLEX</scope>
    <scope>FUNCTION</scope>
    <scope>INTERACTION WITH TMCO1; CCDC47; NCLN; NOMO; TMEM147; SEC61A1 AND SEC61G</scope>
</reference>
<reference evidence="16" key="23">
    <citation type="journal article" date="2023" name="Nature">
        <title>Visualization of translation and protein biogenesis at the ER membrane.</title>
        <authorList>
            <person name="Gemmer M."/>
            <person name="Chaillet M.L."/>
            <person name="van Loenhout J."/>
            <person name="Cuevas Arenas R."/>
            <person name="Vismpas D."/>
            <person name="Grollers-Mulderij M."/>
            <person name="Koh F.A."/>
            <person name="Albanese P."/>
            <person name="Scheltema R.A."/>
            <person name="Howes S.C."/>
            <person name="Kotecha A."/>
            <person name="Fedry J."/>
            <person name="Forster F."/>
        </authorList>
    </citation>
    <scope>STRUCTURE BY ELECTRON MICROSCOPY (7.60 ANGSTROMS) OF THE STT3A-CONTAINING OLIGOSACCHARYLTRANSFERASE (OST) AND TRANSLOCON COMPLEXES</scope>
    <scope>SUBUNIT</scope>
</reference>
<reference key="24">
    <citation type="journal article" date="2022" name="Nature">
        <title>Substrate-driven assembly of a translocon for multipass membrane proteins.</title>
        <authorList>
            <person name="Sundaram A."/>
            <person name="Yamsek M."/>
            <person name="Zhong F."/>
            <person name="Hooda Y."/>
            <person name="Hegde R.S."/>
            <person name="Keenan R.J."/>
        </authorList>
    </citation>
    <scope>FUNCTION</scope>
    <scope>INTERACTION WITH THE MULTI-PASS TRANSLOCON COMPLEX</scope>
    <scope>SUBCELLULAR LOCATION</scope>
</reference>
<organism>
    <name type="scientific">Homo sapiens</name>
    <name type="common">Human</name>
    <dbReference type="NCBI Taxonomy" id="9606"/>
    <lineage>
        <taxon>Eukaryota</taxon>
        <taxon>Metazoa</taxon>
        <taxon>Chordata</taxon>
        <taxon>Craniata</taxon>
        <taxon>Vertebrata</taxon>
        <taxon>Euteleostomi</taxon>
        <taxon>Mammalia</taxon>
        <taxon>Eutheria</taxon>
        <taxon>Euarchontoglires</taxon>
        <taxon>Primates</taxon>
        <taxon>Haplorrhini</taxon>
        <taxon>Catarrhini</taxon>
        <taxon>Hominidae</taxon>
        <taxon>Homo</taxon>
    </lineage>
</organism>
<evidence type="ECO:0000255" key="1"/>
<evidence type="ECO:0000256" key="2">
    <source>
        <dbReference type="SAM" id="MobiDB-lite"/>
    </source>
</evidence>
<evidence type="ECO:0000269" key="3">
    <source>
    </source>
</evidence>
<evidence type="ECO:0000269" key="4">
    <source>
    </source>
</evidence>
<evidence type="ECO:0000269" key="5">
    <source>
    </source>
</evidence>
<evidence type="ECO:0000269" key="6">
    <source>
    </source>
</evidence>
<evidence type="ECO:0000269" key="7">
    <source>
    </source>
</evidence>
<evidence type="ECO:0000269" key="8">
    <source>
    </source>
</evidence>
<evidence type="ECO:0000269" key="9">
    <source>
    </source>
</evidence>
<evidence type="ECO:0000269" key="10">
    <source ref="5"/>
</evidence>
<evidence type="ECO:0000303" key="11">
    <source>
    </source>
</evidence>
<evidence type="ECO:0000305" key="12"/>
<evidence type="ECO:0000305" key="13">
    <source>
    </source>
</evidence>
<evidence type="ECO:0000305" key="14">
    <source>
    </source>
</evidence>
<evidence type="ECO:0000312" key="15">
    <source>
        <dbReference type="HGNC" id="HGNC:16993"/>
    </source>
</evidence>
<evidence type="ECO:0007744" key="16">
    <source>
        <dbReference type="PDB" id="8B6L"/>
    </source>
</evidence>
<evidence type="ECO:0007744" key="17">
    <source>
    </source>
</evidence>
<evidence type="ECO:0007744" key="18">
    <source>
    </source>
</evidence>
<evidence type="ECO:0007744" key="19">
    <source>
    </source>
</evidence>
<evidence type="ECO:0007744" key="20">
    <source>
    </source>
</evidence>
<evidence type="ECO:0007744" key="21">
    <source>
    </source>
</evidence>
<evidence type="ECO:0007744" key="22">
    <source>
    </source>
</evidence>
<evidence type="ECO:0007829" key="23">
    <source>
        <dbReference type="PDB" id="8DNW"/>
    </source>
</evidence>
<evidence type="ECO:0007829" key="24">
    <source>
        <dbReference type="PDB" id="8DNZ"/>
    </source>
</evidence>
<protein>
    <recommendedName>
        <fullName>Protein transport protein Sec61 subunit beta</fullName>
    </recommendedName>
</protein>
<accession>P60468</accession>
<accession>P38390</accession>
<accession>P38391</accession>
<accession>Q6IBC1</accession>
<keyword id="KW-0002">3D-structure</keyword>
<keyword id="KW-0007">Acetylation</keyword>
<keyword id="KW-0903">Direct protein sequencing</keyword>
<keyword id="KW-0256">Endoplasmic reticulum</keyword>
<keyword id="KW-0449">Lipoprotein</keyword>
<keyword id="KW-0472">Membrane</keyword>
<keyword id="KW-0564">Palmitate</keyword>
<keyword id="KW-0597">Phosphoprotein</keyword>
<keyword id="KW-0653">Protein transport</keyword>
<keyword id="KW-1267">Proteomics identification</keyword>
<keyword id="KW-1185">Reference proteome</keyword>
<keyword id="KW-0811">Translocation</keyword>
<keyword id="KW-0812">Transmembrane</keyword>
<keyword id="KW-1133">Transmembrane helix</keyword>
<keyword id="KW-0813">Transport</keyword>
<feature type="initiator methionine" description="Removed" evidence="10 19 22">
    <location>
        <position position="1"/>
    </location>
</feature>
<feature type="chain" id="PRO_0000157254" description="Protein transport protein Sec61 subunit beta">
    <location>
        <begin position="2"/>
        <end position="96"/>
    </location>
</feature>
<feature type="topological domain" description="Cytoplasmic" evidence="12">
    <location>
        <begin position="2"/>
        <end position="70"/>
    </location>
</feature>
<feature type="transmembrane region" description="Helical" evidence="1">
    <location>
        <begin position="71"/>
        <end position="91"/>
    </location>
</feature>
<feature type="topological domain" description="Lumenal" evidence="12">
    <location>
        <begin position="92"/>
        <end position="96"/>
    </location>
</feature>
<feature type="region of interest" description="Disordered" evidence="2">
    <location>
        <begin position="1"/>
        <end position="54"/>
    </location>
</feature>
<feature type="compositionally biased region" description="Polar residues" evidence="2">
    <location>
        <begin position="1"/>
        <end position="17"/>
    </location>
</feature>
<feature type="compositionally biased region" description="Low complexity" evidence="2">
    <location>
        <begin position="40"/>
        <end position="50"/>
    </location>
</feature>
<feature type="modified residue" description="N-acetylproline" evidence="19">
    <location>
        <position position="2"/>
    </location>
</feature>
<feature type="modified residue" description="Phosphoserine" evidence="10">
    <location>
        <position position="7"/>
    </location>
</feature>
<feature type="modified residue" description="Phosphothreonine" evidence="20">
    <location>
        <position position="9"/>
    </location>
</feature>
<feature type="modified residue" description="Phosphoserine" evidence="17">
    <location>
        <position position="13"/>
    </location>
</feature>
<feature type="modified residue" description="Phosphoserine" evidence="17 20">
    <location>
        <position position="14"/>
    </location>
</feature>
<feature type="modified residue" description="Phosphoserine" evidence="17 18 19 20 21">
    <location>
        <position position="17"/>
    </location>
</feature>
<feature type="lipid moiety-binding region" description="S-palmitoyl cysteine" evidence="13">
    <location>
        <position position="39"/>
    </location>
</feature>
<feature type="mutagenesis site" description="Abolishes S-acylation." evidence="5">
    <original>C</original>
    <variation>S</variation>
    <location>
        <position position="39"/>
    </location>
</feature>
<feature type="strand" evidence="23">
    <location>
        <begin position="66"/>
        <end position="68"/>
    </location>
</feature>
<feature type="helix" evidence="24">
    <location>
        <begin position="70"/>
        <end position="95"/>
    </location>
</feature>
<sequence length="96" mass="9974">MPGPTPSGTNVGSSGRSPSKAVAARAAGSTVRQRKNASCGTRSAGRTTSAGTGGMWRFYTEDSPGLKVGPVPVLVMSLLFIASVFMLHIWGKYTRS</sequence>
<name>SC61B_HUMAN</name>